<reference key="1">
    <citation type="journal article" date="1997" name="FEBS Lett.">
        <title>Purification, biochemical properties and substrate specificity of a catechol 1,2-dioxygenase from a phenol degrading Acinetobacter radioresistens.</title>
        <authorList>
            <person name="Briganti F."/>
            <person name="Pessione E."/>
            <person name="Giunta C."/>
            <person name="Scozzafava A."/>
        </authorList>
    </citation>
    <scope>PROTEIN SEQUENCE</scope>
</reference>
<proteinExistence type="evidence at protein level"/>
<feature type="chain" id="PRO_0000085083" description="Catechol 1,2-dioxygenase">
    <location>
        <begin position="1"/>
        <end position="20" status="greater than"/>
    </location>
</feature>
<feature type="non-terminal residue">
    <location>
        <position position="20"/>
    </location>
</feature>
<organism>
    <name type="scientific">Acinetobacter radioresistens</name>
    <dbReference type="NCBI Taxonomy" id="40216"/>
    <lineage>
        <taxon>Bacteria</taxon>
        <taxon>Pseudomonadati</taxon>
        <taxon>Pseudomonadota</taxon>
        <taxon>Gammaproteobacteria</taxon>
        <taxon>Moraxellales</taxon>
        <taxon>Moraxellaceae</taxon>
        <taxon>Acinetobacter</taxon>
    </lineage>
</organism>
<protein>
    <recommendedName>
        <fullName>Catechol 1,2-dioxygenase</fullName>
        <ecNumber>1.13.11.1</ecNumber>
    </recommendedName>
    <alternativeName>
        <fullName>1,2-CTD</fullName>
    </alternativeName>
</protein>
<keyword id="KW-0058">Aromatic hydrocarbons catabolism</keyword>
<keyword id="KW-0223">Dioxygenase</keyword>
<keyword id="KW-0903">Direct protein sequencing</keyword>
<keyword id="KW-0408">Iron</keyword>
<keyword id="KW-0560">Oxidoreductase</keyword>
<sequence>TAANVKIFNTEEVQNFINLL</sequence>
<name>CATA_ACIRA</name>
<dbReference type="EC" id="1.13.11.1"/>
<dbReference type="UniPathway" id="UPA00157">
    <property type="reaction ID" value="UER00258"/>
</dbReference>
<dbReference type="GO" id="GO:0018576">
    <property type="term" value="F:catechol 1,2-dioxygenase activity"/>
    <property type="evidence" value="ECO:0007669"/>
    <property type="project" value="UniProtKB-EC"/>
</dbReference>
<dbReference type="GO" id="GO:0042952">
    <property type="term" value="P:beta-ketoadipate pathway"/>
    <property type="evidence" value="ECO:0007669"/>
    <property type="project" value="UniProtKB-UniPathway"/>
</dbReference>
<comment type="catalytic activity">
    <reaction>
        <text>catechol + O2 = cis,cis-muconate + 2 H(+)</text>
        <dbReference type="Rhea" id="RHEA:23852"/>
        <dbReference type="ChEBI" id="CHEBI:15378"/>
        <dbReference type="ChEBI" id="CHEBI:15379"/>
        <dbReference type="ChEBI" id="CHEBI:18135"/>
        <dbReference type="ChEBI" id="CHEBI:32379"/>
        <dbReference type="EC" id="1.13.11.1"/>
    </reaction>
</comment>
<comment type="cofactor">
    <cofactor>
        <name>Fe(3+)</name>
        <dbReference type="ChEBI" id="CHEBI:29034"/>
    </cofactor>
    <text>Binds 1 Fe(3+) ion per subunit.</text>
</comment>
<comment type="pathway">
    <text>Aromatic compound metabolism; beta-ketoadipate pathway; 5-oxo-4,5-dihydro-2-furylacetate from catechol: step 1/3.</text>
</comment>
<comment type="subunit">
    <text>Homodimer which dissociates into active monomeric subunits at high ionic strengths.</text>
</comment>
<comment type="similarity">
    <text evidence="1">Belongs to the intradiol ring-cleavage dioxygenase family.</text>
</comment>
<evidence type="ECO:0000305" key="1"/>
<accession>P81422</accession>